<keyword id="KW-0963">Cytoplasm</keyword>
<keyword id="KW-0238">DNA-binding</keyword>
<keyword id="KW-0804">Transcription</keyword>
<keyword id="KW-0805">Transcription regulation</keyword>
<dbReference type="EMBL" id="AM260525">
    <property type="protein sequence ID" value="CAK02371.1"/>
    <property type="molecule type" value="Genomic_DNA"/>
</dbReference>
<dbReference type="RefSeq" id="WP_012232429.1">
    <property type="nucleotide sequence ID" value="NC_010161.1"/>
</dbReference>
<dbReference type="SMR" id="A9IYI8"/>
<dbReference type="KEGG" id="btr:BT_2363"/>
<dbReference type="eggNOG" id="COG0217">
    <property type="taxonomic scope" value="Bacteria"/>
</dbReference>
<dbReference type="HOGENOM" id="CLU_062974_2_2_5"/>
<dbReference type="Proteomes" id="UP000001592">
    <property type="component" value="Chromosome"/>
</dbReference>
<dbReference type="GO" id="GO:0005829">
    <property type="term" value="C:cytosol"/>
    <property type="evidence" value="ECO:0007669"/>
    <property type="project" value="TreeGrafter"/>
</dbReference>
<dbReference type="GO" id="GO:0003677">
    <property type="term" value="F:DNA binding"/>
    <property type="evidence" value="ECO:0007669"/>
    <property type="project" value="UniProtKB-UniRule"/>
</dbReference>
<dbReference type="GO" id="GO:0006355">
    <property type="term" value="P:regulation of DNA-templated transcription"/>
    <property type="evidence" value="ECO:0007669"/>
    <property type="project" value="UniProtKB-UniRule"/>
</dbReference>
<dbReference type="FunFam" id="1.10.10.200:FF:000002">
    <property type="entry name" value="Probable transcriptional regulatory protein CLM62_37755"/>
    <property type="match status" value="1"/>
</dbReference>
<dbReference type="Gene3D" id="1.10.10.200">
    <property type="match status" value="1"/>
</dbReference>
<dbReference type="Gene3D" id="3.30.70.980">
    <property type="match status" value="2"/>
</dbReference>
<dbReference type="HAMAP" id="MF_00693">
    <property type="entry name" value="Transcrip_reg_TACO1"/>
    <property type="match status" value="1"/>
</dbReference>
<dbReference type="InterPro" id="IPR017856">
    <property type="entry name" value="Integrase-like_N"/>
</dbReference>
<dbReference type="InterPro" id="IPR048300">
    <property type="entry name" value="TACO1_YebC-like_2nd/3rd_dom"/>
</dbReference>
<dbReference type="InterPro" id="IPR049083">
    <property type="entry name" value="TACO1_YebC_N"/>
</dbReference>
<dbReference type="InterPro" id="IPR002876">
    <property type="entry name" value="Transcrip_reg_TACO1-like"/>
</dbReference>
<dbReference type="InterPro" id="IPR026564">
    <property type="entry name" value="Transcrip_reg_TACO1-like_dom3"/>
</dbReference>
<dbReference type="InterPro" id="IPR029072">
    <property type="entry name" value="YebC-like"/>
</dbReference>
<dbReference type="NCBIfam" id="NF001030">
    <property type="entry name" value="PRK00110.1"/>
    <property type="match status" value="1"/>
</dbReference>
<dbReference type="NCBIfam" id="NF009044">
    <property type="entry name" value="PRK12378.1"/>
    <property type="match status" value="1"/>
</dbReference>
<dbReference type="NCBIfam" id="TIGR01033">
    <property type="entry name" value="YebC/PmpR family DNA-binding transcriptional regulator"/>
    <property type="match status" value="1"/>
</dbReference>
<dbReference type="PANTHER" id="PTHR12532:SF6">
    <property type="entry name" value="TRANSCRIPTIONAL REGULATORY PROTEIN YEBC-RELATED"/>
    <property type="match status" value="1"/>
</dbReference>
<dbReference type="PANTHER" id="PTHR12532">
    <property type="entry name" value="TRANSLATIONAL ACTIVATOR OF CYTOCHROME C OXIDASE 1"/>
    <property type="match status" value="1"/>
</dbReference>
<dbReference type="Pfam" id="PF20772">
    <property type="entry name" value="TACO1_YebC_N"/>
    <property type="match status" value="1"/>
</dbReference>
<dbReference type="Pfam" id="PF01709">
    <property type="entry name" value="Transcrip_reg"/>
    <property type="match status" value="1"/>
</dbReference>
<dbReference type="SUPFAM" id="SSF75625">
    <property type="entry name" value="YebC-like"/>
    <property type="match status" value="1"/>
</dbReference>
<name>Y2363_BART1</name>
<organism>
    <name type="scientific">Bartonella tribocorum (strain CIP 105476 / IBS 506)</name>
    <dbReference type="NCBI Taxonomy" id="382640"/>
    <lineage>
        <taxon>Bacteria</taxon>
        <taxon>Pseudomonadati</taxon>
        <taxon>Pseudomonadota</taxon>
        <taxon>Alphaproteobacteria</taxon>
        <taxon>Hyphomicrobiales</taxon>
        <taxon>Bartonellaceae</taxon>
        <taxon>Bartonella</taxon>
    </lineage>
</organism>
<proteinExistence type="inferred from homology"/>
<comment type="subcellular location">
    <subcellularLocation>
        <location evidence="1">Cytoplasm</location>
    </subcellularLocation>
</comment>
<comment type="similarity">
    <text evidence="1">Belongs to the TACO1 family.</text>
</comment>
<reference key="1">
    <citation type="journal article" date="2007" name="Nat. Genet.">
        <title>Genomic analysis of Bartonella identifies type IV secretion systems as host adaptability factors.</title>
        <authorList>
            <person name="Saenz H.L."/>
            <person name="Engel P."/>
            <person name="Stoeckli M.C."/>
            <person name="Lanz C."/>
            <person name="Raddatz G."/>
            <person name="Vayssier-Taussat M."/>
            <person name="Birtles R."/>
            <person name="Schuster S.C."/>
            <person name="Dehio C."/>
        </authorList>
    </citation>
    <scope>NUCLEOTIDE SEQUENCE [LARGE SCALE GENOMIC DNA]</scope>
    <source>
        <strain>CIP 105476 / IBS 506</strain>
    </source>
</reference>
<protein>
    <recommendedName>
        <fullName evidence="1">Probable transcriptional regulatory protein BT_2363</fullName>
    </recommendedName>
</protein>
<gene>
    <name type="ordered locus">BT_2363</name>
</gene>
<evidence type="ECO:0000255" key="1">
    <source>
        <dbReference type="HAMAP-Rule" id="MF_00693"/>
    </source>
</evidence>
<accession>A9IYI8</accession>
<sequence>MAGHSQFKNIMHRKGRQDAVRSKIFSKLAREITVAAKQGAPDPAMNPRLRLAVQNAKAQSMPKDNIERAIKKASGTDVENYDEVRYEGYGPGGVAVIVEALTDNRNRTASNVRAAFTKSGGALGETGSVSFMFNRIGEIIYKPEAGTADHIMDAAIEAGAEDVQSEESGHHITCAFEDIGEVSKTLESKLGEAESIKTIWKATTLAPIDEEKALSVLRLISTLEEDDDVQNVYANFDVSDEILAKLSV</sequence>
<feature type="chain" id="PRO_1000083143" description="Probable transcriptional regulatory protein BT_2363">
    <location>
        <begin position="1"/>
        <end position="248"/>
    </location>
</feature>